<keyword id="KW-0010">Activator</keyword>
<keyword id="KW-0238">DNA-binding</keyword>
<keyword id="KW-0312">Gluconeogenesis</keyword>
<keyword id="KW-0479">Metal-binding</keyword>
<keyword id="KW-0539">Nucleus</keyword>
<keyword id="KW-1185">Reference proteome</keyword>
<keyword id="KW-0804">Transcription</keyword>
<keyword id="KW-0805">Transcription regulation</keyword>
<keyword id="KW-0862">Zinc</keyword>
<reference key="1">
    <citation type="journal article" date="2006" name="Nature">
        <title>Insights from the genome of the biotrophic fungal plant pathogen Ustilago maydis.</title>
        <authorList>
            <person name="Kaemper J."/>
            <person name="Kahmann R."/>
            <person name="Boelker M."/>
            <person name="Ma L.-J."/>
            <person name="Brefort T."/>
            <person name="Saville B.J."/>
            <person name="Banuett F."/>
            <person name="Kronstad J.W."/>
            <person name="Gold S.E."/>
            <person name="Mueller O."/>
            <person name="Perlin M.H."/>
            <person name="Woesten H.A.B."/>
            <person name="de Vries R."/>
            <person name="Ruiz-Herrera J."/>
            <person name="Reynaga-Pena C.G."/>
            <person name="Snetselaar K."/>
            <person name="McCann M."/>
            <person name="Perez-Martin J."/>
            <person name="Feldbruegge M."/>
            <person name="Basse C.W."/>
            <person name="Steinberg G."/>
            <person name="Ibeas J.I."/>
            <person name="Holloman W."/>
            <person name="Guzman P."/>
            <person name="Farman M.L."/>
            <person name="Stajich J.E."/>
            <person name="Sentandreu R."/>
            <person name="Gonzalez-Prieto J.M."/>
            <person name="Kennell J.C."/>
            <person name="Molina L."/>
            <person name="Schirawski J."/>
            <person name="Mendoza-Mendoza A."/>
            <person name="Greilinger D."/>
            <person name="Muench K."/>
            <person name="Roessel N."/>
            <person name="Scherer M."/>
            <person name="Vranes M."/>
            <person name="Ladendorf O."/>
            <person name="Vincon V."/>
            <person name="Fuchs U."/>
            <person name="Sandrock B."/>
            <person name="Meng S."/>
            <person name="Ho E.C.H."/>
            <person name="Cahill M.J."/>
            <person name="Boyce K.J."/>
            <person name="Klose J."/>
            <person name="Klosterman S.J."/>
            <person name="Deelstra H.J."/>
            <person name="Ortiz-Castellanos L."/>
            <person name="Li W."/>
            <person name="Sanchez-Alonso P."/>
            <person name="Schreier P.H."/>
            <person name="Haeuser-Hahn I."/>
            <person name="Vaupel M."/>
            <person name="Koopmann E."/>
            <person name="Friedrich G."/>
            <person name="Voss H."/>
            <person name="Schlueter T."/>
            <person name="Margolis J."/>
            <person name="Platt D."/>
            <person name="Swimmer C."/>
            <person name="Gnirke A."/>
            <person name="Chen F."/>
            <person name="Vysotskaia V."/>
            <person name="Mannhaupt G."/>
            <person name="Gueldener U."/>
            <person name="Muensterkoetter M."/>
            <person name="Haase D."/>
            <person name="Oesterheld M."/>
            <person name="Mewes H.-W."/>
            <person name="Mauceli E.W."/>
            <person name="DeCaprio D."/>
            <person name="Wade C.M."/>
            <person name="Butler J."/>
            <person name="Young S.K."/>
            <person name="Jaffe D.B."/>
            <person name="Calvo S.E."/>
            <person name="Nusbaum C."/>
            <person name="Galagan J.E."/>
            <person name="Birren B.W."/>
        </authorList>
    </citation>
    <scope>NUCLEOTIDE SEQUENCE [LARGE SCALE GENOMIC DNA]</scope>
    <source>
        <strain>DSM 14603 / FGSC 9021 / UM521</strain>
    </source>
</reference>
<reference key="2">
    <citation type="submission" date="2014-09" db="EMBL/GenBank/DDBJ databases">
        <authorList>
            <person name="Gueldener U."/>
            <person name="Muensterkoetter M."/>
            <person name="Walter M.C."/>
            <person name="Mannhaupt G."/>
            <person name="Kahmann R."/>
        </authorList>
    </citation>
    <scope>GENOME REANNOTATION</scope>
    <source>
        <strain>DSM 14603 / FGSC 9021 / UM521</strain>
    </source>
</reference>
<proteinExistence type="inferred from homology"/>
<accession>Q4PD88</accession>
<accession>A0A0D1CC49</accession>
<name>ERT1_MYCMD</name>
<evidence type="ECO:0000250" key="1"/>
<evidence type="ECO:0000255" key="2">
    <source>
        <dbReference type="PROSITE-ProRule" id="PRU00227"/>
    </source>
</evidence>
<evidence type="ECO:0000256" key="3">
    <source>
        <dbReference type="SAM" id="MobiDB-lite"/>
    </source>
</evidence>
<evidence type="ECO:0000305" key="4"/>
<comment type="function">
    <text evidence="1">Transcription factor which regulates nonfermentable carbon utilization. Activator of gluconeogenetic genes (By similarity).</text>
</comment>
<comment type="subcellular location">
    <subcellularLocation>
        <location evidence="2">Nucleus</location>
    </subcellularLocation>
</comment>
<comment type="similarity">
    <text evidence="4">Belongs to the ERT1/acuK family.</text>
</comment>
<feature type="chain" id="PRO_0000406470" description="Transcription activator of gluconeogenesis ERT1">
    <location>
        <begin position="1"/>
        <end position="721"/>
    </location>
</feature>
<feature type="domain" description="PAS">
    <location>
        <begin position="606"/>
        <end position="673"/>
    </location>
</feature>
<feature type="DNA-binding region" description="Zn(2)-C6 fungal-type" evidence="2">
    <location>
        <begin position="174"/>
        <end position="202"/>
    </location>
</feature>
<feature type="region of interest" description="Disordered" evidence="3">
    <location>
        <begin position="1"/>
        <end position="172"/>
    </location>
</feature>
<feature type="region of interest" description="Disordered" evidence="3">
    <location>
        <begin position="196"/>
        <end position="331"/>
    </location>
</feature>
<feature type="region of interest" description="Disordered" evidence="3">
    <location>
        <begin position="464"/>
        <end position="509"/>
    </location>
</feature>
<feature type="compositionally biased region" description="Basic and acidic residues" evidence="3">
    <location>
        <begin position="1"/>
        <end position="10"/>
    </location>
</feature>
<feature type="compositionally biased region" description="Polar residues" evidence="3">
    <location>
        <begin position="16"/>
        <end position="26"/>
    </location>
</feature>
<feature type="compositionally biased region" description="Low complexity" evidence="3">
    <location>
        <begin position="42"/>
        <end position="67"/>
    </location>
</feature>
<feature type="compositionally biased region" description="Polar residues" evidence="3">
    <location>
        <begin position="75"/>
        <end position="88"/>
    </location>
</feature>
<feature type="compositionally biased region" description="Low complexity" evidence="3">
    <location>
        <begin position="89"/>
        <end position="117"/>
    </location>
</feature>
<feature type="compositionally biased region" description="Polar residues" evidence="3">
    <location>
        <begin position="127"/>
        <end position="141"/>
    </location>
</feature>
<feature type="compositionally biased region" description="Low complexity" evidence="3">
    <location>
        <begin position="142"/>
        <end position="162"/>
    </location>
</feature>
<feature type="compositionally biased region" description="Basic and acidic residues" evidence="3">
    <location>
        <begin position="221"/>
        <end position="230"/>
    </location>
</feature>
<feature type="compositionally biased region" description="Low complexity" evidence="3">
    <location>
        <begin position="233"/>
        <end position="254"/>
    </location>
</feature>
<feature type="compositionally biased region" description="Polar residues" evidence="3">
    <location>
        <begin position="255"/>
        <end position="278"/>
    </location>
</feature>
<feature type="compositionally biased region" description="Low complexity" evidence="3">
    <location>
        <begin position="288"/>
        <end position="297"/>
    </location>
</feature>
<feature type="compositionally biased region" description="Polar residues" evidence="3">
    <location>
        <begin position="303"/>
        <end position="325"/>
    </location>
</feature>
<feature type="compositionally biased region" description="Gly residues" evidence="3">
    <location>
        <begin position="470"/>
        <end position="482"/>
    </location>
</feature>
<feature type="compositionally biased region" description="Polar residues" evidence="3">
    <location>
        <begin position="484"/>
        <end position="507"/>
    </location>
</feature>
<protein>
    <recommendedName>
        <fullName>Transcription activator of gluconeogenesis ERT1</fullName>
    </recommendedName>
</protein>
<sequence length="721" mass="76603">MSSAKGDKLAPRPPSYGSNQSATPTYSLPPHPSTTYPQRHQSPASHAAASTLAALASSPPASSSTASPHPPNVLPTPSSASTSYNARPSTTSTLNQSLYSSSASPAAKAATAGISPSGSPLRKEVHMSSTKQTPAASTSTLAKPASSSTTGTPTPSSASKESGSSKRKKATRACLHCQKAHLTCDDSRPCQRCVKKGLAESCMDGRRKKAKYLLDDDELEELRRQKEAKKAAKQAVQQKNAPSPQQRQSRPSQQDSAKSTPQNSDPSSEKASAVSSILDQVAGSIATPSSSGHGPSPHAHDYLSSNPFDSSNGGVDDTQASSNNGGALPFDLSFDPSTHNFGSEATSLEYSILSSMLNGTDLQLMGASGASPDLQASPAVGVMNGWNIASGELDAILNISMQQNQVPGAGGMDTVAATYSDTADMGVYADPQPNTGLQDVGGGDSALNALEVPSSQCTAKEEPILLSSGSGNGNGNGSGSGSGEAQQAGSNNQVDLGSSSQRSTSNEPVAADINRAIASRRVARQQQDTIWRARIAKTYRDNTAPFPYPEGYHFLIKYVTSKYEKQDVLRIVRALAIFRPSLIALQMPLTEEDEIFVERSFQRTMLEFEKLISFSGTPTVVWRRTCEICVVGAEFCMLTQWSKDQLMGRRIYEFMDKNSTLDYWENFAQHAFENTTQSVMTTCTLVKPDGKLVPCAWSFTIKRDIFDLPSLVVGNFLPILS</sequence>
<organism>
    <name type="scientific">Mycosarcoma maydis</name>
    <name type="common">Corn smut fungus</name>
    <name type="synonym">Ustilago maydis</name>
    <dbReference type="NCBI Taxonomy" id="5270"/>
    <lineage>
        <taxon>Eukaryota</taxon>
        <taxon>Fungi</taxon>
        <taxon>Dikarya</taxon>
        <taxon>Basidiomycota</taxon>
        <taxon>Ustilaginomycotina</taxon>
        <taxon>Ustilaginomycetes</taxon>
        <taxon>Ustilaginales</taxon>
        <taxon>Ustilaginaceae</taxon>
        <taxon>Mycosarcoma</taxon>
    </lineage>
</organism>
<dbReference type="EMBL" id="CM003142">
    <property type="protein sequence ID" value="KIS70772.1"/>
    <property type="molecule type" value="Genomic_DNA"/>
</dbReference>
<dbReference type="RefSeq" id="XP_011387974.1">
    <property type="nucleotide sequence ID" value="XM_011389672.1"/>
</dbReference>
<dbReference type="SMR" id="Q4PD88"/>
<dbReference type="EnsemblFungi" id="KIS70772">
    <property type="protein sequence ID" value="KIS70772"/>
    <property type="gene ID" value="UMAG_10450"/>
</dbReference>
<dbReference type="GeneID" id="23566486"/>
<dbReference type="KEGG" id="uma:UMAG_10450"/>
<dbReference type="VEuPathDB" id="FungiDB:UMAG_10450"/>
<dbReference type="eggNOG" id="ENOG502R1M5">
    <property type="taxonomic scope" value="Eukaryota"/>
</dbReference>
<dbReference type="HOGENOM" id="CLU_010748_2_0_1"/>
<dbReference type="InParanoid" id="Q4PD88"/>
<dbReference type="OrthoDB" id="2538135at2759"/>
<dbReference type="Proteomes" id="UP000000561">
    <property type="component" value="Chromosome 3"/>
</dbReference>
<dbReference type="GO" id="GO:0005634">
    <property type="term" value="C:nucleus"/>
    <property type="evidence" value="ECO:0000318"/>
    <property type="project" value="GO_Central"/>
</dbReference>
<dbReference type="GO" id="GO:0003700">
    <property type="term" value="F:DNA-binding transcription factor activity"/>
    <property type="evidence" value="ECO:0000318"/>
    <property type="project" value="GO_Central"/>
</dbReference>
<dbReference type="GO" id="GO:0000981">
    <property type="term" value="F:DNA-binding transcription factor activity, RNA polymerase II-specific"/>
    <property type="evidence" value="ECO:0007669"/>
    <property type="project" value="InterPro"/>
</dbReference>
<dbReference type="GO" id="GO:0000977">
    <property type="term" value="F:RNA polymerase II transcription regulatory region sequence-specific DNA binding"/>
    <property type="evidence" value="ECO:0000318"/>
    <property type="project" value="GO_Central"/>
</dbReference>
<dbReference type="GO" id="GO:0008270">
    <property type="term" value="F:zinc ion binding"/>
    <property type="evidence" value="ECO:0007669"/>
    <property type="project" value="InterPro"/>
</dbReference>
<dbReference type="GO" id="GO:0009267">
    <property type="term" value="P:cellular response to starvation"/>
    <property type="evidence" value="ECO:0000318"/>
    <property type="project" value="GO_Central"/>
</dbReference>
<dbReference type="GO" id="GO:0006094">
    <property type="term" value="P:gluconeogenesis"/>
    <property type="evidence" value="ECO:0007669"/>
    <property type="project" value="UniProtKB-KW"/>
</dbReference>
<dbReference type="CDD" id="cd00067">
    <property type="entry name" value="GAL4"/>
    <property type="match status" value="1"/>
</dbReference>
<dbReference type="CDD" id="cd00130">
    <property type="entry name" value="PAS"/>
    <property type="match status" value="1"/>
</dbReference>
<dbReference type="Gene3D" id="3.30.450.20">
    <property type="entry name" value="PAS domain"/>
    <property type="match status" value="1"/>
</dbReference>
<dbReference type="Gene3D" id="4.10.240.10">
    <property type="entry name" value="Zn(2)-C6 fungal-type DNA-binding domain"/>
    <property type="match status" value="1"/>
</dbReference>
<dbReference type="InterPro" id="IPR050335">
    <property type="entry name" value="ERT1_acuK_gluconeogen_tf"/>
</dbReference>
<dbReference type="InterPro" id="IPR000014">
    <property type="entry name" value="PAS"/>
</dbReference>
<dbReference type="InterPro" id="IPR035965">
    <property type="entry name" value="PAS-like_dom_sf"/>
</dbReference>
<dbReference type="InterPro" id="IPR056751">
    <property type="entry name" value="PAS_13"/>
</dbReference>
<dbReference type="InterPro" id="IPR036864">
    <property type="entry name" value="Zn2-C6_fun-type_DNA-bd_sf"/>
</dbReference>
<dbReference type="InterPro" id="IPR001138">
    <property type="entry name" value="Zn2Cys6_DnaBD"/>
</dbReference>
<dbReference type="PANTHER" id="PTHR47659:SF1">
    <property type="entry name" value="TRANSCRIPTION ACTIVATOR OF GLUCONEOGENESIS ERT1"/>
    <property type="match status" value="1"/>
</dbReference>
<dbReference type="PANTHER" id="PTHR47659">
    <property type="entry name" value="ZN(II)2CYS6 TRANSCRIPTION FACTOR (EUROFUNG)-RELATED"/>
    <property type="match status" value="1"/>
</dbReference>
<dbReference type="Pfam" id="PF24990">
    <property type="entry name" value="PAS_13"/>
    <property type="match status" value="2"/>
</dbReference>
<dbReference type="Pfam" id="PF00172">
    <property type="entry name" value="Zn_clus"/>
    <property type="match status" value="1"/>
</dbReference>
<dbReference type="SMART" id="SM00066">
    <property type="entry name" value="GAL4"/>
    <property type="match status" value="1"/>
</dbReference>
<dbReference type="SUPFAM" id="SSF55785">
    <property type="entry name" value="PYP-like sensor domain (PAS domain)"/>
    <property type="match status" value="1"/>
</dbReference>
<dbReference type="SUPFAM" id="SSF57701">
    <property type="entry name" value="Zn2/Cys6 DNA-binding domain"/>
    <property type="match status" value="1"/>
</dbReference>
<dbReference type="PROSITE" id="PS50048">
    <property type="entry name" value="ZN2_CY6_FUNGAL_2"/>
    <property type="match status" value="1"/>
</dbReference>
<gene>
    <name type="primary">ERT1</name>
    <name type="ORF">UMAG_10450</name>
</gene>